<protein>
    <recommendedName>
        <fullName>STAS-domain containing protein PA14_20770</fullName>
    </recommendedName>
</protein>
<keyword id="KW-0964">Secreted</keyword>
<name>Y2077_PSEAB</name>
<sequence>MAITALPSADGQELTIQIQGRFDFGAHQDFRDAYERVAITPRRYVVDLRNATYLDSSALGMLLLLRDHAGGENAQISLANCSPEVRKILAISNFEQLFKIS</sequence>
<reference key="1">
    <citation type="journal article" date="2006" name="Genome Biol.">
        <title>Genomic analysis reveals that Pseudomonas aeruginosa virulence is combinatorial.</title>
        <authorList>
            <person name="Lee D.G."/>
            <person name="Urbach J.M."/>
            <person name="Wu G."/>
            <person name="Liberati N.T."/>
            <person name="Feinbaum R.L."/>
            <person name="Miyata S."/>
            <person name="Diggins L.T."/>
            <person name="He J."/>
            <person name="Saucier M."/>
            <person name="Deziel E."/>
            <person name="Friedman L."/>
            <person name="Li L."/>
            <person name="Grills G."/>
            <person name="Montgomery K."/>
            <person name="Kucherlapati R."/>
            <person name="Rahme L.G."/>
            <person name="Ausubel F.M."/>
        </authorList>
    </citation>
    <scope>NUCLEOTIDE SEQUENCE [LARGE SCALE GENOMIC DNA]</scope>
    <source>
        <strain>UCBPP-PA14</strain>
    </source>
</reference>
<reference key="2">
    <citation type="journal article" date="2014" name="Anal. Bioanal. Chem.">
        <title>Potential of liquid-isoelectric-focusing protein fractionation to improve phosphoprotein characterization of Pseudomonas aeruginosa PA14.</title>
        <authorList>
            <person name="Ouidir T."/>
            <person name="Jarnier F."/>
            <person name="Cosette P."/>
            <person name="Jouenne T."/>
            <person name="Hardouin J."/>
        </authorList>
    </citation>
    <scope>IDENTIFICATION BY MASS SPECTROMETRY</scope>
    <source>
        <strain>UCBPP-PA14</strain>
    </source>
</reference>
<reference key="3">
    <citation type="journal article" date="2014" name="Proteomics">
        <title>Extracellular Ser/Thr/Tyr phosphorylated proteins of Pseudomonas aeruginosa PA14 strain.</title>
        <authorList>
            <person name="Ouidir T."/>
            <person name="Jarnier F."/>
            <person name="Cosette P."/>
            <person name="Jouenne T."/>
            <person name="Hardouin J."/>
        </authorList>
    </citation>
    <scope>IDENTIFICATION BY MASS SPECTROMETRY</scope>
    <scope>SUBCELLULAR LOCATION</scope>
    <scope>PHOSPHORYLATION</scope>
    <source>
        <strain>UCBPP-PA14</strain>
    </source>
</reference>
<feature type="chain" id="PRO_0000431470" description="STAS-domain containing protein PA14_20770">
    <location>
        <begin position="1"/>
        <end position="101"/>
    </location>
</feature>
<feature type="domain" description="STAS" evidence="1">
    <location>
        <begin position="14"/>
        <end position="101"/>
    </location>
</feature>
<organism>
    <name type="scientific">Pseudomonas aeruginosa (strain UCBPP-PA14)</name>
    <dbReference type="NCBI Taxonomy" id="208963"/>
    <lineage>
        <taxon>Bacteria</taxon>
        <taxon>Pseudomonadati</taxon>
        <taxon>Pseudomonadota</taxon>
        <taxon>Gammaproteobacteria</taxon>
        <taxon>Pseudomonadales</taxon>
        <taxon>Pseudomonadaceae</taxon>
        <taxon>Pseudomonas</taxon>
    </lineage>
</organism>
<dbReference type="EMBL" id="CP000438">
    <property type="protein sequence ID" value="ABJ12598.1"/>
    <property type="molecule type" value="Genomic_DNA"/>
</dbReference>
<dbReference type="SMR" id="Q02QI1"/>
<dbReference type="KEGG" id="pau:PA14_20770"/>
<dbReference type="PseudoCAP" id="PA14_20770"/>
<dbReference type="HOGENOM" id="CLU_115403_9_1_6"/>
<dbReference type="BioCyc" id="PAER208963:G1G74-1714-MONOMER"/>
<dbReference type="Proteomes" id="UP000000653">
    <property type="component" value="Chromosome"/>
</dbReference>
<dbReference type="GO" id="GO:0005576">
    <property type="term" value="C:extracellular region"/>
    <property type="evidence" value="ECO:0007669"/>
    <property type="project" value="UniProtKB-SubCell"/>
</dbReference>
<dbReference type="GO" id="GO:0043856">
    <property type="term" value="F:anti-sigma factor antagonist activity"/>
    <property type="evidence" value="ECO:0007669"/>
    <property type="project" value="TreeGrafter"/>
</dbReference>
<dbReference type="CDD" id="cd07043">
    <property type="entry name" value="STAS_anti-anti-sigma_factors"/>
    <property type="match status" value="1"/>
</dbReference>
<dbReference type="Gene3D" id="3.30.750.24">
    <property type="entry name" value="STAS domain"/>
    <property type="match status" value="1"/>
</dbReference>
<dbReference type="InterPro" id="IPR002645">
    <property type="entry name" value="STAS_dom"/>
</dbReference>
<dbReference type="InterPro" id="IPR036513">
    <property type="entry name" value="STAS_dom_sf"/>
</dbReference>
<dbReference type="PANTHER" id="PTHR33495">
    <property type="entry name" value="ANTI-SIGMA FACTOR ANTAGONIST TM_1081-RELATED-RELATED"/>
    <property type="match status" value="1"/>
</dbReference>
<dbReference type="PANTHER" id="PTHR33495:SF15">
    <property type="entry name" value="STAS DOMAIN-CONTAINING PROTEIN"/>
    <property type="match status" value="1"/>
</dbReference>
<dbReference type="Pfam" id="PF13466">
    <property type="entry name" value="STAS_2"/>
    <property type="match status" value="1"/>
</dbReference>
<dbReference type="SUPFAM" id="SSF52091">
    <property type="entry name" value="SpoIIaa-like"/>
    <property type="match status" value="1"/>
</dbReference>
<dbReference type="PROSITE" id="PS50801">
    <property type="entry name" value="STAS"/>
    <property type="match status" value="1"/>
</dbReference>
<gene>
    <name type="ordered locus">PA14_20770</name>
</gene>
<evidence type="ECO:0000255" key="1">
    <source>
        <dbReference type="PROSITE-ProRule" id="PRU00198"/>
    </source>
</evidence>
<evidence type="ECO:0000269" key="2">
    <source>
    </source>
</evidence>
<evidence type="ECO:0000305" key="3"/>
<accession>Q02QI1</accession>
<proteinExistence type="evidence at protein level"/>
<comment type="subcellular location">
    <subcellularLocation>
        <location evidence="2">Secreted</location>
    </subcellularLocation>
    <text evidence="3">Could be present extracellularly due to cell lysis.</text>
</comment>
<comment type="PTM">
    <text evidence="2">Phosphorylated on a serine residue, possibly on Ser-56.</text>
</comment>